<dbReference type="EC" id="1.1.1.23" evidence="1"/>
<dbReference type="EMBL" id="AY142932">
    <property type="protein sequence ID" value="AAN87536.1"/>
    <property type="molecule type" value="Genomic_DNA"/>
</dbReference>
<dbReference type="RefSeq" id="WP_155476137.1">
    <property type="nucleotide sequence ID" value="NZ_WNKU01000008.1"/>
</dbReference>
<dbReference type="SMR" id="Q8GDP4"/>
<dbReference type="OrthoDB" id="9805269at2"/>
<dbReference type="UniPathway" id="UPA00031">
    <property type="reaction ID" value="UER00014"/>
</dbReference>
<dbReference type="GO" id="GO:0005829">
    <property type="term" value="C:cytosol"/>
    <property type="evidence" value="ECO:0007669"/>
    <property type="project" value="TreeGrafter"/>
</dbReference>
<dbReference type="GO" id="GO:0004399">
    <property type="term" value="F:histidinol dehydrogenase activity"/>
    <property type="evidence" value="ECO:0007669"/>
    <property type="project" value="UniProtKB-EC"/>
</dbReference>
<dbReference type="GO" id="GO:0046872">
    <property type="term" value="F:metal ion binding"/>
    <property type="evidence" value="ECO:0007669"/>
    <property type="project" value="UniProtKB-KW"/>
</dbReference>
<dbReference type="GO" id="GO:0051287">
    <property type="term" value="F:NAD binding"/>
    <property type="evidence" value="ECO:0007669"/>
    <property type="project" value="InterPro"/>
</dbReference>
<dbReference type="GO" id="GO:0000105">
    <property type="term" value="P:L-histidine biosynthetic process"/>
    <property type="evidence" value="ECO:0007669"/>
    <property type="project" value="UniProtKB-UniPathway"/>
</dbReference>
<dbReference type="CDD" id="cd06572">
    <property type="entry name" value="Histidinol_dh"/>
    <property type="match status" value="1"/>
</dbReference>
<dbReference type="FunFam" id="3.40.50.1980:FF:000001">
    <property type="entry name" value="Histidinol dehydrogenase"/>
    <property type="match status" value="1"/>
</dbReference>
<dbReference type="FunFam" id="3.40.50.1980:FF:000026">
    <property type="entry name" value="Histidinol dehydrogenase"/>
    <property type="match status" value="1"/>
</dbReference>
<dbReference type="Gene3D" id="1.20.5.1300">
    <property type="match status" value="1"/>
</dbReference>
<dbReference type="Gene3D" id="3.40.50.1980">
    <property type="entry name" value="Nitrogenase molybdenum iron protein domain"/>
    <property type="match status" value="2"/>
</dbReference>
<dbReference type="HAMAP" id="MF_01024">
    <property type="entry name" value="HisD"/>
    <property type="match status" value="1"/>
</dbReference>
<dbReference type="InterPro" id="IPR016161">
    <property type="entry name" value="Ald_DH/histidinol_DH"/>
</dbReference>
<dbReference type="InterPro" id="IPR001692">
    <property type="entry name" value="Histidinol_DH_CS"/>
</dbReference>
<dbReference type="InterPro" id="IPR022695">
    <property type="entry name" value="Histidinol_DH_monofunct"/>
</dbReference>
<dbReference type="InterPro" id="IPR012131">
    <property type="entry name" value="Hstdl_DH"/>
</dbReference>
<dbReference type="NCBIfam" id="TIGR00069">
    <property type="entry name" value="hisD"/>
    <property type="match status" value="1"/>
</dbReference>
<dbReference type="PANTHER" id="PTHR21256:SF2">
    <property type="entry name" value="HISTIDINE BIOSYNTHESIS TRIFUNCTIONAL PROTEIN"/>
    <property type="match status" value="1"/>
</dbReference>
<dbReference type="PANTHER" id="PTHR21256">
    <property type="entry name" value="HISTIDINOL DEHYDROGENASE HDH"/>
    <property type="match status" value="1"/>
</dbReference>
<dbReference type="Pfam" id="PF00815">
    <property type="entry name" value="Histidinol_dh"/>
    <property type="match status" value="1"/>
</dbReference>
<dbReference type="PIRSF" id="PIRSF000099">
    <property type="entry name" value="Histidinol_dh"/>
    <property type="match status" value="1"/>
</dbReference>
<dbReference type="PRINTS" id="PR00083">
    <property type="entry name" value="HOLDHDRGNASE"/>
</dbReference>
<dbReference type="SUPFAM" id="SSF53720">
    <property type="entry name" value="ALDH-like"/>
    <property type="match status" value="1"/>
</dbReference>
<dbReference type="PROSITE" id="PS00611">
    <property type="entry name" value="HISOL_DEHYDROGENASE"/>
    <property type="match status" value="1"/>
</dbReference>
<reference key="1">
    <citation type="journal article" date="2002" name="Science">
        <title>Whole-genome analysis of photosynthetic prokaryotes.</title>
        <authorList>
            <person name="Raymond J."/>
            <person name="Zhaxybayeva O."/>
            <person name="Gogarten J.P."/>
            <person name="Gerdes S.Y."/>
            <person name="Blankenship R.E."/>
        </authorList>
    </citation>
    <scope>NUCLEOTIDE SEQUENCE [GENOMIC DNA]</scope>
</reference>
<proteinExistence type="inferred from homology"/>
<organism>
    <name type="scientific">Heliobacterium mobile</name>
    <name type="common">Heliobacillus mobilis</name>
    <dbReference type="NCBI Taxonomy" id="28064"/>
    <lineage>
        <taxon>Bacteria</taxon>
        <taxon>Bacillati</taxon>
        <taxon>Bacillota</taxon>
        <taxon>Clostridia</taxon>
        <taxon>Eubacteriales</taxon>
        <taxon>Heliobacteriaceae</taxon>
        <taxon>Heliobacterium</taxon>
    </lineage>
</organism>
<name>HISX_HELMO</name>
<comment type="function">
    <text evidence="1">Catalyzes the sequential NAD-dependent oxidations of L-histidinol to L-histidinaldehyde and then to L-histidine.</text>
</comment>
<comment type="catalytic activity">
    <reaction evidence="1">
        <text>L-histidinol + 2 NAD(+) + H2O = L-histidine + 2 NADH + 3 H(+)</text>
        <dbReference type="Rhea" id="RHEA:20641"/>
        <dbReference type="ChEBI" id="CHEBI:15377"/>
        <dbReference type="ChEBI" id="CHEBI:15378"/>
        <dbReference type="ChEBI" id="CHEBI:57540"/>
        <dbReference type="ChEBI" id="CHEBI:57595"/>
        <dbReference type="ChEBI" id="CHEBI:57699"/>
        <dbReference type="ChEBI" id="CHEBI:57945"/>
        <dbReference type="EC" id="1.1.1.23"/>
    </reaction>
</comment>
<comment type="cofactor">
    <cofactor evidence="1">
        <name>Zn(2+)</name>
        <dbReference type="ChEBI" id="CHEBI:29105"/>
    </cofactor>
    <text evidence="1">Binds 1 zinc ion per subunit.</text>
</comment>
<comment type="pathway">
    <text evidence="1">Amino-acid biosynthesis; L-histidine biosynthesis; L-histidine from 5-phospho-alpha-D-ribose 1-diphosphate: step 9/9.</text>
</comment>
<comment type="similarity">
    <text evidence="1">Belongs to the histidinol dehydrogenase family.</text>
</comment>
<gene>
    <name evidence="1" type="primary">hisD</name>
</gene>
<evidence type="ECO:0000255" key="1">
    <source>
        <dbReference type="HAMAP-Rule" id="MF_01024"/>
    </source>
</evidence>
<protein>
    <recommendedName>
        <fullName evidence="1">Histidinol dehydrogenase</fullName>
        <shortName evidence="1">HDH</shortName>
        <ecNumber evidence="1">1.1.1.23</ecNumber>
    </recommendedName>
</protein>
<feature type="chain" id="PRO_0000135780" description="Histidinol dehydrogenase">
    <location>
        <begin position="1"/>
        <end position="426" status="greater than"/>
    </location>
</feature>
<feature type="active site" description="Proton acceptor" evidence="1">
    <location>
        <position position="323"/>
    </location>
</feature>
<feature type="active site" description="Proton acceptor" evidence="1">
    <location>
        <position position="324"/>
    </location>
</feature>
<feature type="binding site" evidence="1">
    <location>
        <position position="126"/>
    </location>
    <ligand>
        <name>NAD(+)</name>
        <dbReference type="ChEBI" id="CHEBI:57540"/>
    </ligand>
</feature>
<feature type="binding site" evidence="1">
    <location>
        <position position="188"/>
    </location>
    <ligand>
        <name>NAD(+)</name>
        <dbReference type="ChEBI" id="CHEBI:57540"/>
    </ligand>
</feature>
<feature type="binding site" evidence="1">
    <location>
        <position position="210"/>
    </location>
    <ligand>
        <name>NAD(+)</name>
        <dbReference type="ChEBI" id="CHEBI:57540"/>
    </ligand>
</feature>
<feature type="binding site" evidence="1">
    <location>
        <position position="233"/>
    </location>
    <ligand>
        <name>substrate</name>
    </ligand>
</feature>
<feature type="binding site" evidence="1">
    <location>
        <position position="255"/>
    </location>
    <ligand>
        <name>substrate</name>
    </ligand>
</feature>
<feature type="binding site" evidence="1">
    <location>
        <position position="255"/>
    </location>
    <ligand>
        <name>Zn(2+)</name>
        <dbReference type="ChEBI" id="CHEBI:29105"/>
    </ligand>
</feature>
<feature type="binding site" evidence="1">
    <location>
        <position position="258"/>
    </location>
    <ligand>
        <name>substrate</name>
    </ligand>
</feature>
<feature type="binding site" evidence="1">
    <location>
        <position position="258"/>
    </location>
    <ligand>
        <name>Zn(2+)</name>
        <dbReference type="ChEBI" id="CHEBI:29105"/>
    </ligand>
</feature>
<feature type="binding site" evidence="1">
    <location>
        <position position="324"/>
    </location>
    <ligand>
        <name>substrate</name>
    </ligand>
</feature>
<feature type="binding site" evidence="1">
    <location>
        <position position="357"/>
    </location>
    <ligand>
        <name>substrate</name>
    </ligand>
</feature>
<feature type="binding site" evidence="1">
    <location>
        <position position="357"/>
    </location>
    <ligand>
        <name>Zn(2+)</name>
        <dbReference type="ChEBI" id="CHEBI:29105"/>
    </ligand>
</feature>
<feature type="binding site" evidence="1">
    <location>
        <position position="411"/>
    </location>
    <ligand>
        <name>substrate</name>
    </ligand>
</feature>
<feature type="binding site" evidence="1">
    <location>
        <position position="416"/>
    </location>
    <ligand>
        <name>substrate</name>
    </ligand>
</feature>
<feature type="binding site" evidence="1">
    <location>
        <position position="416"/>
    </location>
    <ligand>
        <name>Zn(2+)</name>
        <dbReference type="ChEBI" id="CHEBI:29105"/>
    </ligand>
</feature>
<feature type="non-terminal residue">
    <location>
        <position position="426"/>
    </location>
</feature>
<keyword id="KW-0028">Amino-acid biosynthesis</keyword>
<keyword id="KW-0368">Histidine biosynthesis</keyword>
<keyword id="KW-0479">Metal-binding</keyword>
<keyword id="KW-0520">NAD</keyword>
<keyword id="KW-0560">Oxidoreductase</keyword>
<keyword id="KW-0862">Zinc</keyword>
<accession>Q8GDP4</accession>
<sequence length="426" mass="46201">MVRLITYPSIDADNYLQKKTLDDANVSVQVAQVLETIRCRGVEAVFEYTKRFDGATVNEANFRVSEAEIDEAYSKVDPEVLAALRRARDNIRRYHEKQLRPSWIEPEADGTMLGQLIRPLERVGTYVPGGLASYPSSVLMNAVPAKVAGVPQVVMATPPGKDGSINPYTLVAAREAGVDEIYRMGGAQAVAAMAYGAGLKAVDKITGPGNIYVTLAKKQVYGTVDIDMLAGPSEILVIADETAPPAYVAADFLSQVEHDVRAAAVLVTPSEILARAVEGEIQRQMDYLPRREIMEQALKDNSAVIVVKDLDEACEVANRYAPEHLEVLTKEPFALLGKLTQAGAIFLGPYSPEPVGDYYAGPNHVLPTGGTARFYSPLNVDTFMKKTSVIAYSKARFEQAADDILALAKCEGLDAHANAVAVRIEK</sequence>